<organism>
    <name type="scientific">Homo sapiens</name>
    <name type="common">Human</name>
    <dbReference type="NCBI Taxonomy" id="9606"/>
    <lineage>
        <taxon>Eukaryota</taxon>
        <taxon>Metazoa</taxon>
        <taxon>Chordata</taxon>
        <taxon>Craniata</taxon>
        <taxon>Vertebrata</taxon>
        <taxon>Euteleostomi</taxon>
        <taxon>Mammalia</taxon>
        <taxon>Eutheria</taxon>
        <taxon>Euarchontoglires</taxon>
        <taxon>Primates</taxon>
        <taxon>Haplorrhini</taxon>
        <taxon>Catarrhini</taxon>
        <taxon>Hominidae</taxon>
        <taxon>Homo</taxon>
    </lineage>
</organism>
<name>NOP2_HUMAN</name>
<proteinExistence type="evidence at protein level"/>
<dbReference type="EC" id="2.1.1.-"/>
<dbReference type="EMBL" id="M32110">
    <property type="protein sequence ID" value="AAA36398.1"/>
    <property type="status" value="ALT_SEQ"/>
    <property type="molecule type" value="mRNA"/>
</dbReference>
<dbReference type="EMBL" id="M33132">
    <property type="status" value="NOT_ANNOTATED_CDS"/>
    <property type="molecule type" value="Genomic_DNA"/>
</dbReference>
<dbReference type="EMBL" id="X55504">
    <property type="protein sequence ID" value="CAA39119.1"/>
    <property type="status" value="ALT_FRAME"/>
    <property type="molecule type" value="mRNA"/>
</dbReference>
<dbReference type="EMBL" id="AK056208">
    <property type="protein sequence ID" value="BAG51648.1"/>
    <property type="molecule type" value="mRNA"/>
</dbReference>
<dbReference type="EMBL" id="AC006064">
    <property type="status" value="NOT_ANNOTATED_CDS"/>
    <property type="molecule type" value="Genomic_DNA"/>
</dbReference>
<dbReference type="EMBL" id="BC082985">
    <property type="protein sequence ID" value="AAH82985.1"/>
    <property type="molecule type" value="mRNA"/>
</dbReference>
<dbReference type="EMBL" id="BC000656">
    <property type="protein sequence ID" value="AAH00656.1"/>
    <property type="molecule type" value="mRNA"/>
</dbReference>
<dbReference type="EMBL" id="BC065257">
    <property type="protein sequence ID" value="AAH65257.1"/>
    <property type="molecule type" value="mRNA"/>
</dbReference>
<dbReference type="EMBL" id="BC106072">
    <property type="protein sequence ID" value="AAI06073.1"/>
    <property type="molecule type" value="mRNA"/>
</dbReference>
<dbReference type="EMBL" id="BC128183">
    <property type="protein sequence ID" value="AAI28184.1"/>
    <property type="molecule type" value="mRNA"/>
</dbReference>
<dbReference type="EMBL" id="BC128184">
    <property type="protein sequence ID" value="AAI28185.1"/>
    <property type="molecule type" value="mRNA"/>
</dbReference>
<dbReference type="CCDS" id="CCDS44811.1">
    <molecule id="P46087-2"/>
</dbReference>
<dbReference type="CCDS" id="CCDS58202.1">
    <molecule id="P46087-3"/>
</dbReference>
<dbReference type="CCDS" id="CCDS58203.1">
    <molecule id="P46087-1"/>
</dbReference>
<dbReference type="CCDS" id="CCDS58204.1">
    <molecule id="P46087-4"/>
</dbReference>
<dbReference type="PIR" id="A48168">
    <property type="entry name" value="A48168"/>
</dbReference>
<dbReference type="RefSeq" id="NP_001028886.1">
    <molecule id="P46087-2"/>
    <property type="nucleotide sequence ID" value="NM_001033714.3"/>
</dbReference>
<dbReference type="RefSeq" id="NP_001245237.1">
    <molecule id="P46087-1"/>
    <property type="nucleotide sequence ID" value="NM_001258308.2"/>
</dbReference>
<dbReference type="RefSeq" id="NP_001245238.1">
    <molecule id="P46087-4"/>
    <property type="nucleotide sequence ID" value="NM_001258309.2"/>
</dbReference>
<dbReference type="RefSeq" id="NP_001245239.1">
    <molecule id="P46087-3"/>
    <property type="nucleotide sequence ID" value="NM_001258310.2"/>
</dbReference>
<dbReference type="RefSeq" id="NP_006161.2">
    <molecule id="P46087-2"/>
    <property type="nucleotide sequence ID" value="NM_006170.4"/>
</dbReference>
<dbReference type="RefSeq" id="XP_005253748.1">
    <property type="nucleotide sequence ID" value="XM_005253691.1"/>
</dbReference>
<dbReference type="PDB" id="8FKT">
    <property type="method" value="EM"/>
    <property type="resolution" value="2.81 A"/>
    <property type="chains" value="SY=1-812"/>
</dbReference>
<dbReference type="PDB" id="8FKU">
    <property type="method" value="EM"/>
    <property type="resolution" value="2.82 A"/>
    <property type="chains" value="SY=1-812"/>
</dbReference>
<dbReference type="PDB" id="8FKV">
    <property type="method" value="EM"/>
    <property type="resolution" value="2.47 A"/>
    <property type="chains" value="SY=1-812"/>
</dbReference>
<dbReference type="PDB" id="8FKW">
    <property type="method" value="EM"/>
    <property type="resolution" value="2.50 A"/>
    <property type="chains" value="SY=1-812"/>
</dbReference>
<dbReference type="PDB" id="8FKX">
    <property type="method" value="EM"/>
    <property type="resolution" value="2.59 A"/>
    <property type="chains" value="SY=1-812"/>
</dbReference>
<dbReference type="PDB" id="8FKY">
    <property type="method" value="EM"/>
    <property type="resolution" value="2.67 A"/>
    <property type="chains" value="SY=1-812"/>
</dbReference>
<dbReference type="PDBsum" id="8FKT"/>
<dbReference type="PDBsum" id="8FKU"/>
<dbReference type="PDBsum" id="8FKV"/>
<dbReference type="PDBsum" id="8FKW"/>
<dbReference type="PDBsum" id="8FKX"/>
<dbReference type="PDBsum" id="8FKY"/>
<dbReference type="EMDB" id="EMD-29256"/>
<dbReference type="EMDB" id="EMD-29257"/>
<dbReference type="EMDB" id="EMD-29258"/>
<dbReference type="EMDB" id="EMD-29259"/>
<dbReference type="EMDB" id="EMD-29260"/>
<dbReference type="EMDB" id="EMD-29261"/>
<dbReference type="SMR" id="P46087"/>
<dbReference type="BioGRID" id="110902">
    <property type="interactions" value="442"/>
</dbReference>
<dbReference type="FunCoup" id="P46087">
    <property type="interactions" value="2753"/>
</dbReference>
<dbReference type="IntAct" id="P46087">
    <property type="interactions" value="237"/>
</dbReference>
<dbReference type="MINT" id="P46087"/>
<dbReference type="STRING" id="9606.ENSP00000371858"/>
<dbReference type="GlyCosmos" id="P46087">
    <property type="glycosylation" value="1 site, 2 glycans"/>
</dbReference>
<dbReference type="GlyGen" id="P46087">
    <property type="glycosylation" value="6 sites, 2 O-linked glycans (5 sites)"/>
</dbReference>
<dbReference type="iPTMnet" id="P46087"/>
<dbReference type="PhosphoSitePlus" id="P46087"/>
<dbReference type="SwissPalm" id="P46087"/>
<dbReference type="BioMuta" id="NOP2"/>
<dbReference type="DMDM" id="146289861"/>
<dbReference type="jPOST" id="P46087"/>
<dbReference type="MassIVE" id="P46087"/>
<dbReference type="PaxDb" id="9606-ENSP00000371858"/>
<dbReference type="PeptideAtlas" id="P46087"/>
<dbReference type="ProteomicsDB" id="55714">
    <molecule id="P46087-1"/>
</dbReference>
<dbReference type="ProteomicsDB" id="55715">
    <molecule id="P46087-2"/>
</dbReference>
<dbReference type="ProteomicsDB" id="58366"/>
<dbReference type="ProteomicsDB" id="61721"/>
<dbReference type="Pumba" id="P46087"/>
<dbReference type="TopDownProteomics" id="P46087-2">
    <molecule id="P46087-2"/>
</dbReference>
<dbReference type="Antibodypedia" id="22530">
    <property type="antibodies" value="105 antibodies from 26 providers"/>
</dbReference>
<dbReference type="DNASU" id="4839"/>
<dbReference type="Ensembl" id="ENST00000322166.10">
    <molecule id="P46087-1"/>
    <property type="protein sequence ID" value="ENSP00000313272.6"/>
    <property type="gene ID" value="ENSG00000111641.13"/>
</dbReference>
<dbReference type="Ensembl" id="ENST00000382421.7">
    <molecule id="P46087-4"/>
    <property type="protein sequence ID" value="ENSP00000371858.3"/>
    <property type="gene ID" value="ENSG00000111641.13"/>
</dbReference>
<dbReference type="Ensembl" id="ENST00000399466.6">
    <molecule id="P46087-2"/>
    <property type="protein sequence ID" value="ENSP00000382392.2"/>
    <property type="gene ID" value="ENSG00000111641.13"/>
</dbReference>
<dbReference type="Ensembl" id="ENST00000537442.5">
    <molecule id="P46087-1"/>
    <property type="protein sequence ID" value="ENSP00000444437.1"/>
    <property type="gene ID" value="ENSG00000111641.13"/>
</dbReference>
<dbReference type="Ensembl" id="ENST00000541778.5">
    <molecule id="P46087-2"/>
    <property type="protein sequence ID" value="ENSP00000443150.1"/>
    <property type="gene ID" value="ENSG00000111641.13"/>
</dbReference>
<dbReference type="Ensembl" id="ENST00000545200.5">
    <molecule id="P46087-3"/>
    <property type="protein sequence ID" value="ENSP00000439422.1"/>
    <property type="gene ID" value="ENSG00000111641.13"/>
</dbReference>
<dbReference type="GeneID" id="4839"/>
<dbReference type="KEGG" id="hsa:4839"/>
<dbReference type="MANE-Select" id="ENST00000322166.10">
    <property type="protein sequence ID" value="ENSP00000313272.6"/>
    <property type="RefSeq nucleotide sequence ID" value="NM_001258308.2"/>
    <property type="RefSeq protein sequence ID" value="NP_001245237.1"/>
</dbReference>
<dbReference type="UCSC" id="uc031yro.1">
    <molecule id="P46087-1"/>
    <property type="organism name" value="human"/>
</dbReference>
<dbReference type="AGR" id="HGNC:7867"/>
<dbReference type="CTD" id="4839"/>
<dbReference type="DisGeNET" id="4839"/>
<dbReference type="GeneCards" id="NOP2"/>
<dbReference type="HGNC" id="HGNC:7867">
    <property type="gene designation" value="NOP2"/>
</dbReference>
<dbReference type="HPA" id="ENSG00000111641">
    <property type="expression patterns" value="Low tissue specificity"/>
</dbReference>
<dbReference type="MIM" id="164031">
    <property type="type" value="gene"/>
</dbReference>
<dbReference type="neXtProt" id="NX_P46087"/>
<dbReference type="OpenTargets" id="ENSG00000111641"/>
<dbReference type="PharmGKB" id="PA164724026"/>
<dbReference type="VEuPathDB" id="HostDB:ENSG00000111641"/>
<dbReference type="eggNOG" id="KOG1122">
    <property type="taxonomic scope" value="Eukaryota"/>
</dbReference>
<dbReference type="GeneTree" id="ENSGT00940000161554"/>
<dbReference type="HOGENOM" id="CLU_005316_2_0_1"/>
<dbReference type="InParanoid" id="P46087"/>
<dbReference type="OMA" id="IMDDYGV"/>
<dbReference type="OrthoDB" id="427002at2759"/>
<dbReference type="PAN-GO" id="P46087">
    <property type="GO annotations" value="4 GO annotations based on evolutionary models"/>
</dbReference>
<dbReference type="PhylomeDB" id="P46087"/>
<dbReference type="TreeFam" id="TF105660"/>
<dbReference type="PathwayCommons" id="P46087"/>
<dbReference type="Reactome" id="R-HSA-6790901">
    <property type="pathway name" value="rRNA modification in the nucleus and cytosol"/>
</dbReference>
<dbReference type="Reactome" id="R-HSA-8869496">
    <property type="pathway name" value="TFAP2A acts as a transcriptional repressor during retinoic acid induced cell differentiation"/>
</dbReference>
<dbReference type="SignaLink" id="P46087"/>
<dbReference type="BioGRID-ORCS" id="4839">
    <property type="hits" value="610 hits in 1172 CRISPR screens"/>
</dbReference>
<dbReference type="CD-CODE" id="91857CE7">
    <property type="entry name" value="Nucleolus"/>
</dbReference>
<dbReference type="ChiTaRS" id="NOP2">
    <property type="organism name" value="human"/>
</dbReference>
<dbReference type="GeneWiki" id="NOL1"/>
<dbReference type="GenomeRNAi" id="4839"/>
<dbReference type="Pharos" id="P46087">
    <property type="development level" value="Tbio"/>
</dbReference>
<dbReference type="PRO" id="PR:P46087"/>
<dbReference type="Proteomes" id="UP000005640">
    <property type="component" value="Chromosome 12"/>
</dbReference>
<dbReference type="RNAct" id="P46087">
    <property type="molecule type" value="protein"/>
</dbReference>
<dbReference type="Bgee" id="ENSG00000111641">
    <property type="expression patterns" value="Expressed in granulocyte and 94 other cell types or tissues"/>
</dbReference>
<dbReference type="ExpressionAtlas" id="P46087">
    <property type="expression patterns" value="baseline and differential"/>
</dbReference>
<dbReference type="GO" id="GO:0005730">
    <property type="term" value="C:nucleolus"/>
    <property type="evidence" value="ECO:0000314"/>
    <property type="project" value="HPA"/>
</dbReference>
<dbReference type="GO" id="GO:0005654">
    <property type="term" value="C:nucleoplasm"/>
    <property type="evidence" value="ECO:0000304"/>
    <property type="project" value="Reactome"/>
</dbReference>
<dbReference type="GO" id="GO:0005634">
    <property type="term" value="C:nucleus"/>
    <property type="evidence" value="ECO:0000314"/>
    <property type="project" value="UniProtKB"/>
</dbReference>
<dbReference type="GO" id="GO:0003723">
    <property type="term" value="F:RNA binding"/>
    <property type="evidence" value="ECO:0007005"/>
    <property type="project" value="UniProtKB"/>
</dbReference>
<dbReference type="GO" id="GO:0009383">
    <property type="term" value="F:rRNA (cytosine-C5-)-methyltransferase activity"/>
    <property type="evidence" value="ECO:0000314"/>
    <property type="project" value="UniProtKB"/>
</dbReference>
<dbReference type="GO" id="GO:0000470">
    <property type="term" value="P:maturation of LSU-rRNA"/>
    <property type="evidence" value="ECO:0000318"/>
    <property type="project" value="GO_Central"/>
</dbReference>
<dbReference type="GO" id="GO:0008284">
    <property type="term" value="P:positive regulation of cell population proliferation"/>
    <property type="evidence" value="ECO:0000314"/>
    <property type="project" value="GO_Central"/>
</dbReference>
<dbReference type="GO" id="GO:1901796">
    <property type="term" value="P:regulation of signal transduction by p53 class mediator"/>
    <property type="evidence" value="ECO:0000315"/>
    <property type="project" value="UniProtKB"/>
</dbReference>
<dbReference type="GO" id="GO:0000027">
    <property type="term" value="P:ribosomal large subunit assembly"/>
    <property type="evidence" value="ECO:0000315"/>
    <property type="project" value="UniProtKB"/>
</dbReference>
<dbReference type="GO" id="GO:0042273">
    <property type="term" value="P:ribosomal large subunit biogenesis"/>
    <property type="evidence" value="ECO:0000314"/>
    <property type="project" value="UniProtKB"/>
</dbReference>
<dbReference type="GO" id="GO:0070475">
    <property type="term" value="P:rRNA base methylation"/>
    <property type="evidence" value="ECO:0000318"/>
    <property type="project" value="GO_Central"/>
</dbReference>
<dbReference type="GO" id="GO:0006364">
    <property type="term" value="P:rRNA processing"/>
    <property type="evidence" value="ECO:0000314"/>
    <property type="project" value="UniProtKB"/>
</dbReference>
<dbReference type="CDD" id="cd02440">
    <property type="entry name" value="AdoMet_MTases"/>
    <property type="match status" value="1"/>
</dbReference>
<dbReference type="FunFam" id="3.40.50.150:FF:000120">
    <property type="entry name" value="probable 28S rRNA (Cytosine(4447)-C(5))-methyltransferase"/>
    <property type="match status" value="1"/>
</dbReference>
<dbReference type="FunFam" id="3.30.70.1170:FF:000001">
    <property type="entry name" value="Ribosomal RNA methyltransferase Nop2"/>
    <property type="match status" value="1"/>
</dbReference>
<dbReference type="Gene3D" id="3.30.70.1170">
    <property type="entry name" value="Sun protein, domain 3"/>
    <property type="match status" value="1"/>
</dbReference>
<dbReference type="Gene3D" id="3.40.50.150">
    <property type="entry name" value="Vaccinia Virus protein VP39"/>
    <property type="match status" value="1"/>
</dbReference>
<dbReference type="InterPro" id="IPR049560">
    <property type="entry name" value="MeTrfase_RsmB-F_NOP2_cat"/>
</dbReference>
<dbReference type="InterPro" id="IPR001678">
    <property type="entry name" value="MeTrfase_RsmB-F_NOP2_dom"/>
</dbReference>
<dbReference type="InterPro" id="IPR012586">
    <property type="entry name" value="NOP2_rpt"/>
</dbReference>
<dbReference type="InterPro" id="IPR011023">
    <property type="entry name" value="Nop2p"/>
</dbReference>
<dbReference type="InterPro" id="IPR023267">
    <property type="entry name" value="RCMT"/>
</dbReference>
<dbReference type="InterPro" id="IPR023273">
    <property type="entry name" value="RCMT_NOP2"/>
</dbReference>
<dbReference type="InterPro" id="IPR054728">
    <property type="entry name" value="RsmB-like_ferredoxin"/>
</dbReference>
<dbReference type="InterPro" id="IPR018314">
    <property type="entry name" value="RsmB/NOL1/NOP2-like_CS"/>
</dbReference>
<dbReference type="InterPro" id="IPR029063">
    <property type="entry name" value="SAM-dependent_MTases_sf"/>
</dbReference>
<dbReference type="NCBIfam" id="TIGR00446">
    <property type="entry name" value="nop2p"/>
    <property type="match status" value="1"/>
</dbReference>
<dbReference type="PANTHER" id="PTHR22807:SF30">
    <property type="entry name" value="28S RRNA (CYTOSINE(4447)-C(5))-METHYLTRANSFERASE-RELATED"/>
    <property type="match status" value="1"/>
</dbReference>
<dbReference type="PANTHER" id="PTHR22807">
    <property type="entry name" value="NOP2 YEAST -RELATED NOL1/NOP2/FMU SUN DOMAIN-CONTAINING"/>
    <property type="match status" value="1"/>
</dbReference>
<dbReference type="Pfam" id="PF01189">
    <property type="entry name" value="Methyltr_RsmB-F"/>
    <property type="match status" value="1"/>
</dbReference>
<dbReference type="Pfam" id="PF08062">
    <property type="entry name" value="NOP2_rpt"/>
    <property type="match status" value="3"/>
</dbReference>
<dbReference type="Pfam" id="PF22458">
    <property type="entry name" value="RsmF-B_ferredox"/>
    <property type="match status" value="1"/>
</dbReference>
<dbReference type="PRINTS" id="PR02008">
    <property type="entry name" value="RCMTFAMILY"/>
</dbReference>
<dbReference type="PRINTS" id="PR02012">
    <property type="entry name" value="RCMTNOP2"/>
</dbReference>
<dbReference type="SUPFAM" id="SSF53335">
    <property type="entry name" value="S-adenosyl-L-methionine-dependent methyltransferases"/>
    <property type="match status" value="1"/>
</dbReference>
<dbReference type="PROSITE" id="PS01153">
    <property type="entry name" value="NOL1_NOP2_SUN"/>
    <property type="match status" value="1"/>
</dbReference>
<dbReference type="PROSITE" id="PS51686">
    <property type="entry name" value="SAM_MT_RSMB_NOP"/>
    <property type="match status" value="1"/>
</dbReference>
<comment type="function">
    <text evidence="9 11 12">S-adenosyl-L-methionine-dependent methyltransferase that specifically methylates the C(5) position of cytosine 4447 in 28S rRNA (PubMed:26196125). Required for efficient rRNA processing and 60S ribosomal subunit biogenesis (PubMed:24120868, PubMed:36161484). Regulates pre-rRNA processing through non-catalytic complex formation with box C/D snoRNAs and facilitates the recruitment of U3 and U8 snoRNAs to pre-90S ribosomal particles and their stable assembly into snoRNP complexes (PubMed:36161484). May play a role in the regulation of the cell cycle and the increased nucleolar activity that is associated with the cell proliferation (PubMed:24120868).</text>
</comment>
<comment type="catalytic activity">
    <reaction evidence="11 12">
        <text>cytidine(4447) in 28S rRNA + S-adenosyl-L-methionine = 5-methylcytidine(4447) in 28S rRNA + S-adenosyl-L-homocysteine + H(+)</text>
        <dbReference type="Rhea" id="RHEA:47792"/>
        <dbReference type="Rhea" id="RHEA-COMP:11917"/>
        <dbReference type="Rhea" id="RHEA-COMP:11918"/>
        <dbReference type="ChEBI" id="CHEBI:15378"/>
        <dbReference type="ChEBI" id="CHEBI:57856"/>
        <dbReference type="ChEBI" id="CHEBI:59789"/>
        <dbReference type="ChEBI" id="CHEBI:74483"/>
        <dbReference type="ChEBI" id="CHEBI:82748"/>
    </reaction>
</comment>
<comment type="subunit">
    <text evidence="7 8 12 13 14">Interacts with MCRS1 (PubMed:9654073). Interacts with WDR46 (PubMed:23848194). Interacts with RRP1B (PubMed:20926688). Interacts with NPM1 (PubMed:8089149). Interacts with NOP56, FBL, RUVBL1 and NUFIP1 (PubMed:36161484).</text>
</comment>
<comment type="interaction">
    <interactant intactId="EBI-356811">
        <id>P46087</id>
    </interactant>
    <interactant intactId="EBI-5278764">
        <id>Q96GN5</id>
        <label>CDCA7L</label>
    </interactant>
    <organismsDiffer>false</organismsDiffer>
    <experiments>3</experiments>
</comment>
<comment type="interaction">
    <interactant intactId="EBI-356811">
        <id>P46087</id>
    </interactant>
    <interactant intactId="EBI-739624">
        <id>Q8NHQ1</id>
        <label>CEP70</label>
    </interactant>
    <organismsDiffer>false</organismsDiffer>
    <experiments>3</experiments>
</comment>
<comment type="interaction">
    <interactant intactId="EBI-356811">
        <id>P46087</id>
    </interactant>
    <interactant intactId="EBI-359923">
        <id>O60684</id>
        <label>KPNA6</label>
    </interactant>
    <organismsDiffer>false</organismsDiffer>
    <experiments>3</experiments>
</comment>
<comment type="interaction">
    <interactant intactId="EBI-356811">
        <id>P46087</id>
    </interactant>
    <interactant intactId="EBI-10209483">
        <id>P04733</id>
        <label>MT1F</label>
    </interactant>
    <organismsDiffer>false</organismsDiffer>
    <experiments>3</experiments>
</comment>
<comment type="interaction">
    <interactant intactId="EBI-356811">
        <id>P46087</id>
    </interactant>
    <interactant intactId="EBI-749003">
        <id>Q9Y221</id>
        <label>NIP7</label>
    </interactant>
    <organismsDiffer>false</organismsDiffer>
    <experiments>5</experiments>
</comment>
<comment type="interaction">
    <interactant intactId="EBI-356811">
        <id>P46087</id>
    </interactant>
    <interactant intactId="EBI-2878099">
        <id>Q9NW13</id>
        <label>RBM28</label>
    </interactant>
    <organismsDiffer>false</organismsDiffer>
    <experiments>3</experiments>
</comment>
<comment type="interaction">
    <interactant intactId="EBI-356811">
        <id>P46087</id>
    </interactant>
    <interactant intactId="EBI-2799833">
        <id>Q8N1B4</id>
        <label>VPS52</label>
    </interactant>
    <organismsDiffer>false</organismsDiffer>
    <experiments>3</experiments>
</comment>
<comment type="subcellular location">
    <subcellularLocation>
        <location evidence="5 11 12 13">Nucleus</location>
        <location evidence="5 11 12 13">Nucleolus</location>
    </subcellularLocation>
    <subcellularLocation>
        <location evidence="12">Nucleus</location>
    </subcellularLocation>
    <text evidence="12">Localizes predominantly in the nucleolus and to a smaller extent in the nucleus.</text>
</comment>
<comment type="alternative products">
    <event type="alternative splicing"/>
    <isoform>
        <id>P46087-1</id>
        <name>1</name>
        <sequence type="displayed"/>
    </isoform>
    <isoform>
        <id>P46087-2</id>
        <name>2</name>
        <sequence type="described" ref="VSP_023494"/>
    </isoform>
    <isoform>
        <id>P46087-3</id>
        <name>3</name>
        <sequence type="described" ref="VSP_023494 VSP_045309"/>
    </isoform>
    <isoform>
        <id>P46087-4</id>
        <name>4</name>
        <sequence type="described" ref="VSP_045308"/>
    </isoform>
</comment>
<comment type="developmental stage">
    <text evidence="10">Expressed in G1 and peaks during the early S phase of the cell cycle.</text>
</comment>
<comment type="PTM">
    <text evidence="2">Citrullinated by PADI4.</text>
</comment>
<comment type="similarity">
    <text evidence="3">Belongs to the class I-like SAM-binding methyltransferase superfamily. RsmB/NOP family.</text>
</comment>
<comment type="sequence caution" evidence="18">
    <conflict type="frameshift">
        <sequence resource="EMBL-CDS" id="AAA36398"/>
    </conflict>
</comment>
<comment type="sequence caution" evidence="18">
    <conflict type="frameshift">
        <sequence resource="EMBL-CDS" id="CAA39119"/>
    </conflict>
</comment>
<keyword id="KW-0002">3D-structure</keyword>
<keyword id="KW-0007">Acetylation</keyword>
<keyword id="KW-0025">Alternative splicing</keyword>
<keyword id="KW-0164">Citrullination</keyword>
<keyword id="KW-1017">Isopeptide bond</keyword>
<keyword id="KW-0489">Methyltransferase</keyword>
<keyword id="KW-0539">Nucleus</keyword>
<keyword id="KW-0597">Phosphoprotein</keyword>
<keyword id="KW-1267">Proteomics identification</keyword>
<keyword id="KW-1185">Reference proteome</keyword>
<keyword id="KW-0690">Ribosome biogenesis</keyword>
<keyword id="KW-0694">RNA-binding</keyword>
<keyword id="KW-0698">rRNA processing</keyword>
<keyword id="KW-0949">S-adenosyl-L-methionine</keyword>
<keyword id="KW-0808">Transferase</keyword>
<keyword id="KW-0832">Ubl conjugation</keyword>
<evidence type="ECO:0000250" key="1"/>
<evidence type="ECO:0000250" key="2">
    <source>
        <dbReference type="UniProtKB" id="Q922K7"/>
    </source>
</evidence>
<evidence type="ECO:0000255" key="3">
    <source>
        <dbReference type="PROSITE-ProRule" id="PRU01023"/>
    </source>
</evidence>
<evidence type="ECO:0000256" key="4">
    <source>
        <dbReference type="SAM" id="MobiDB-lite"/>
    </source>
</evidence>
<evidence type="ECO:0000269" key="5">
    <source>
    </source>
</evidence>
<evidence type="ECO:0000269" key="6">
    <source>
    </source>
</evidence>
<evidence type="ECO:0000269" key="7">
    <source>
    </source>
</evidence>
<evidence type="ECO:0000269" key="8">
    <source>
    </source>
</evidence>
<evidence type="ECO:0000269" key="9">
    <source>
    </source>
</evidence>
<evidence type="ECO:0000269" key="10">
    <source>
    </source>
</evidence>
<evidence type="ECO:0000269" key="11">
    <source>
    </source>
</evidence>
<evidence type="ECO:0000269" key="12">
    <source>
    </source>
</evidence>
<evidence type="ECO:0000269" key="13">
    <source>
    </source>
</evidence>
<evidence type="ECO:0000269" key="14">
    <source>
    </source>
</evidence>
<evidence type="ECO:0000303" key="15">
    <source>
    </source>
</evidence>
<evidence type="ECO:0000303" key="16">
    <source>
    </source>
</evidence>
<evidence type="ECO:0000303" key="17">
    <source>
    </source>
</evidence>
<evidence type="ECO:0000305" key="18"/>
<evidence type="ECO:0000305" key="19">
    <source>
    </source>
</evidence>
<evidence type="ECO:0007744" key="20">
    <source>
    </source>
</evidence>
<evidence type="ECO:0007744" key="21">
    <source>
    </source>
</evidence>
<evidence type="ECO:0007744" key="22">
    <source>
    </source>
</evidence>
<evidence type="ECO:0007744" key="23">
    <source>
    </source>
</evidence>
<evidence type="ECO:0007744" key="24">
    <source>
    </source>
</evidence>
<evidence type="ECO:0007744" key="25">
    <source>
    </source>
</evidence>
<evidence type="ECO:0007744" key="26">
    <source>
    </source>
</evidence>
<evidence type="ECO:0007744" key="27">
    <source>
    </source>
</evidence>
<evidence type="ECO:0007744" key="28">
    <source>
    </source>
</evidence>
<evidence type="ECO:0007744" key="29">
    <source>
    </source>
</evidence>
<evidence type="ECO:0007744" key="30">
    <source>
    </source>
</evidence>
<evidence type="ECO:0007744" key="31">
    <source>
    </source>
</evidence>
<feature type="chain" id="PRO_0000211818" description="28S rRNA (cytosine(4447)-C(5))-methyltransferase">
    <location>
        <begin position="1"/>
        <end position="812"/>
    </location>
</feature>
<feature type="region of interest" description="N-terminal domain" evidence="19">
    <location>
        <begin position="1"/>
        <end position="370"/>
    </location>
</feature>
<feature type="region of interest" description="Disordered" evidence="4">
    <location>
        <begin position="1"/>
        <end position="211"/>
    </location>
</feature>
<feature type="region of interest" description="Interaction with NPM1" evidence="13">
    <location>
        <begin position="24"/>
        <end position="56"/>
    </location>
</feature>
<feature type="region of interest" description="Catalytic domain" evidence="19">
    <location>
        <begin position="371"/>
        <end position="594"/>
    </location>
</feature>
<feature type="region of interest" description="Disordered" evidence="4">
    <location>
        <begin position="591"/>
        <end position="812"/>
    </location>
</feature>
<feature type="region of interest" description="C-terminal domain" evidence="19">
    <location>
        <begin position="595"/>
        <end position="812"/>
    </location>
</feature>
<feature type="short sequence motif" description="Nucleolar localization signal" evidence="13">
    <location>
        <begin position="40"/>
        <end position="57"/>
    </location>
</feature>
<feature type="short sequence motif" description="Nuclear localization signal" evidence="13">
    <location>
        <begin position="99"/>
        <end position="110"/>
    </location>
</feature>
<feature type="compositionally biased region" description="Basic and acidic residues" evidence="4">
    <location>
        <begin position="1"/>
        <end position="13"/>
    </location>
</feature>
<feature type="compositionally biased region" description="Basic residues" evidence="4">
    <location>
        <begin position="43"/>
        <end position="56"/>
    </location>
</feature>
<feature type="compositionally biased region" description="Acidic residues" evidence="4">
    <location>
        <begin position="111"/>
        <end position="124"/>
    </location>
</feature>
<feature type="compositionally biased region" description="Acidic residues" evidence="4">
    <location>
        <begin position="133"/>
        <end position="157"/>
    </location>
</feature>
<feature type="compositionally biased region" description="Acidic residues" evidence="4">
    <location>
        <begin position="181"/>
        <end position="192"/>
    </location>
</feature>
<feature type="compositionally biased region" description="Polar residues" evidence="4">
    <location>
        <begin position="591"/>
        <end position="608"/>
    </location>
</feature>
<feature type="compositionally biased region" description="Polar residues" evidence="4">
    <location>
        <begin position="660"/>
        <end position="682"/>
    </location>
</feature>
<feature type="compositionally biased region" description="Polar residues" evidence="4">
    <location>
        <begin position="723"/>
        <end position="739"/>
    </location>
</feature>
<feature type="compositionally biased region" description="Polar residues" evidence="4">
    <location>
        <begin position="803"/>
        <end position="812"/>
    </location>
</feature>
<feature type="active site" description="Nucleophile" evidence="3">
    <location>
        <position position="517"/>
    </location>
</feature>
<feature type="binding site" evidence="3">
    <location>
        <begin position="392"/>
        <end position="398"/>
    </location>
    <ligand>
        <name>S-adenosyl-L-methionine</name>
        <dbReference type="ChEBI" id="CHEBI:59789"/>
    </ligand>
</feature>
<feature type="binding site" evidence="3">
    <location>
        <position position="416"/>
    </location>
    <ligand>
        <name>S-adenosyl-L-methionine</name>
        <dbReference type="ChEBI" id="CHEBI:59789"/>
    </ligand>
</feature>
<feature type="binding site" evidence="3">
    <location>
        <position position="443"/>
    </location>
    <ligand>
        <name>S-adenosyl-L-methionine</name>
        <dbReference type="ChEBI" id="CHEBI:59789"/>
    </ligand>
</feature>
<feature type="binding site" evidence="3">
    <location>
        <position position="460"/>
    </location>
    <ligand>
        <name>S-adenosyl-L-methionine</name>
        <dbReference type="ChEBI" id="CHEBI:59789"/>
    </ligand>
</feature>
<feature type="modified residue" description="Phosphoserine" evidence="23">
    <location>
        <position position="36"/>
    </location>
</feature>
<feature type="modified residue" description="Phosphoserine" evidence="24 29">
    <location>
        <position position="58"/>
    </location>
</feature>
<feature type="modified residue" description="Phosphoserine" evidence="22 23 28 29">
    <location>
        <position position="67"/>
    </location>
</feature>
<feature type="modified residue" description="Citrulline" evidence="1">
    <location>
        <position position="102"/>
    </location>
</feature>
<feature type="modified residue" description="Citrulline" evidence="1">
    <location>
        <position position="164"/>
    </location>
</feature>
<feature type="modified residue" description="Phosphoserine" evidence="21 23 24 26 27 28">
    <location>
        <position position="181"/>
    </location>
</feature>
<feature type="modified residue" description="Phosphothreonine" evidence="21 23 24 26 27 28">
    <location>
        <position position="185"/>
    </location>
</feature>
<feature type="modified residue" description="Phosphothreonine" evidence="28">
    <location>
        <position position="195"/>
    </location>
</feature>
<feature type="modified residue" description="N6-acetyllysine" evidence="25">
    <location>
        <position position="649"/>
    </location>
</feature>
<feature type="modified residue" description="Phosphoserine" evidence="23">
    <location>
        <position position="666"/>
    </location>
</feature>
<feature type="modified residue" description="Phosphoserine" evidence="23">
    <location>
        <position position="675"/>
    </location>
</feature>
<feature type="modified residue" description="Phosphoserine" evidence="20 23 26 27 28 29">
    <location>
        <position position="732"/>
    </location>
</feature>
<feature type="modified residue" description="Phosphoserine" evidence="23">
    <location>
        <position position="734"/>
    </location>
</feature>
<feature type="modified residue" description="Phosphothreonine" evidence="23">
    <location>
        <position position="739"/>
    </location>
</feature>
<feature type="modified residue" description="Phosphothreonine" evidence="23">
    <location>
        <position position="776"/>
    </location>
</feature>
<feature type="modified residue" description="Phosphoserine" evidence="23 27 28 29">
    <location>
        <position position="786"/>
    </location>
</feature>
<feature type="modified residue" description="Phosphoserine" evidence="28">
    <location>
        <position position="801"/>
    </location>
</feature>
<feature type="modified residue" description="Phosphoserine" evidence="23 27">
    <location>
        <position position="812"/>
    </location>
</feature>
<feature type="cross-link" description="Glycyl lysine isopeptide (Lys-Gly) (interchain with G-Cter in SUMO2)" evidence="31">
    <location>
        <position position="71"/>
    </location>
</feature>
<feature type="cross-link" description="Glycyl lysine isopeptide (Lys-Gly) (interchain with G-Cter in SUMO2)" evidence="31">
    <location>
        <position position="272"/>
    </location>
</feature>
<feature type="cross-link" description="Glycyl lysine isopeptide (Lys-Gly) (interchain with G-Cter in SUMO2)" evidence="30 31">
    <location>
        <position position="615"/>
    </location>
</feature>
<feature type="splice variant" id="VSP_023494" description="In isoform 2 and isoform 3." evidence="15 16">
    <location>
        <begin position="81"/>
        <end position="84"/>
    </location>
</feature>
<feature type="splice variant" id="VSP_045308" description="In isoform 4." evidence="16">
    <original>A</original>
    <variation>AAGVQWLGLGSLQPPPPGFKQFSCLSFPSSWDLQ</variation>
    <location>
        <position position="158"/>
    </location>
</feature>
<feature type="splice variant" id="VSP_045309" description="In isoform 3." evidence="16">
    <original>GNSETATPTNVDLPQVIPKSENSSQPAKKAKGAAKTKQQLQKQQHPKKASFQKLNGISKGADSELSTVPSVTKTQASSSFQDSSQPAGKAEGIREPKVTGKLKQRSPKLQSSKKVAFLRQNAPPKGTDTQTPAVLSPSKTQATLKPKDHHQPLGRAKGVEKQQLPEQPFEKAAFQKQNDTPKGPQPPTVSPIRSSRPPPAKRKKSQSRGNSQLLLS</original>
    <variation>DGVLLCRSGWTAVVQSQLIATSTFQVQAILVPQTPK</variation>
    <location>
        <begin position="597"/>
        <end position="812"/>
    </location>
</feature>
<feature type="sequence variant" id="VAR_030938" description="In dbSNP:rs1128164." evidence="6 10">
    <original>L</original>
    <variation>S</variation>
    <location>
        <position position="73"/>
    </location>
</feature>
<feature type="mutagenesis site" description="Loss of catalytic activity. Can rescue the rRNA processing defects observed upon depletion of NOP2." evidence="12">
    <original>C</original>
    <variation>A</variation>
    <location>
        <position position="517"/>
    </location>
</feature>
<feature type="sequence conflict" description="In Ref. 6; AAI28185." evidence="18" ref="6">
    <original>F</original>
    <variation>L</variation>
    <location>
        <position position="559"/>
    </location>
</feature>
<feature type="sequence conflict" description="In Ref. 1; AAA36398." evidence="18" ref="1">
    <original>A</original>
    <variation>G</variation>
    <location>
        <position position="630"/>
    </location>
</feature>
<feature type="sequence conflict" description="In Ref. 1; AAA36398 and 3; CAA39119." evidence="18" ref="1 3">
    <original>LP</original>
    <variation>FA</variation>
    <location>
        <begin position="760"/>
        <end position="761"/>
    </location>
</feature>
<reference key="1">
    <citation type="journal article" date="1989" name="Cancer Commun.">
        <title>Cloning of the cDNA and sequence of the human proliferating-cell nucleolar protein P120.</title>
        <authorList>
            <person name="Fonagy A."/>
            <person name="Henning D."/>
            <person name="Jhiang S."/>
            <person name="Haidar M.A."/>
            <person name="Busch R.K."/>
            <person name="Larson R.G."/>
            <person name="Valdez B."/>
            <person name="Busch H."/>
        </authorList>
    </citation>
    <scope>NUCLEOTIDE SEQUENCE [MRNA] (ISOFORM 1)</scope>
    <scope>DEVELOPMENTAL STAGE</scope>
    <scope>VARIANT SER-73</scope>
</reference>
<reference key="2">
    <citation type="journal article" date="1990" name="Cancer Commun.">
        <title>Genomic structure of the human proliferating cell nucleolar protein p120.</title>
        <authorList>
            <person name="Larson R.G."/>
            <person name="Henning D."/>
            <person name="Haidar M.A."/>
            <person name="Jhiang S."/>
            <person name="Lin W.L."/>
            <person name="Zhang W.W."/>
            <person name="Busch H."/>
        </authorList>
    </citation>
    <scope>NUCLEOTIDE SEQUENCE [GENOMIC DNA]</scope>
</reference>
<reference key="3">
    <citation type="journal article" date="1992" name="Cancer Res.">
        <title>A region of antisense RNA from human p120 cDNA with high homology to mouse p120 cDNA inhibits NIH 3T3 proliferation.</title>
        <authorList>
            <person name="Valdez B.C."/>
            <person name="Perlaky L."/>
            <person name="Saijo Y."/>
            <person name="Henning D."/>
            <person name="Zhu C."/>
            <person name="Busch R.K."/>
            <person name="Zhang W.W."/>
            <person name="Busch H."/>
        </authorList>
    </citation>
    <scope>NUCLEOTIDE SEQUENCE [MRNA] (ISOFORM 1)</scope>
    <scope>VARIANT SER-73</scope>
</reference>
<reference key="4">
    <citation type="journal article" date="2004" name="Nat. Genet.">
        <title>Complete sequencing and characterization of 21,243 full-length human cDNAs.</title>
        <authorList>
            <person name="Ota T."/>
            <person name="Suzuki Y."/>
            <person name="Nishikawa T."/>
            <person name="Otsuki T."/>
            <person name="Sugiyama T."/>
            <person name="Irie R."/>
            <person name="Wakamatsu A."/>
            <person name="Hayashi K."/>
            <person name="Sato H."/>
            <person name="Nagai K."/>
            <person name="Kimura K."/>
            <person name="Makita H."/>
            <person name="Sekine M."/>
            <person name="Obayashi M."/>
            <person name="Nishi T."/>
            <person name="Shibahara T."/>
            <person name="Tanaka T."/>
            <person name="Ishii S."/>
            <person name="Yamamoto J."/>
            <person name="Saito K."/>
            <person name="Kawai Y."/>
            <person name="Isono Y."/>
            <person name="Nakamura Y."/>
            <person name="Nagahari K."/>
            <person name="Murakami K."/>
            <person name="Yasuda T."/>
            <person name="Iwayanagi T."/>
            <person name="Wagatsuma M."/>
            <person name="Shiratori A."/>
            <person name="Sudo H."/>
            <person name="Hosoiri T."/>
            <person name="Kaku Y."/>
            <person name="Kodaira H."/>
            <person name="Kondo H."/>
            <person name="Sugawara M."/>
            <person name="Takahashi M."/>
            <person name="Kanda K."/>
            <person name="Yokoi T."/>
            <person name="Furuya T."/>
            <person name="Kikkawa E."/>
            <person name="Omura Y."/>
            <person name="Abe K."/>
            <person name="Kamihara K."/>
            <person name="Katsuta N."/>
            <person name="Sato K."/>
            <person name="Tanikawa M."/>
            <person name="Yamazaki M."/>
            <person name="Ninomiya K."/>
            <person name="Ishibashi T."/>
            <person name="Yamashita H."/>
            <person name="Murakawa K."/>
            <person name="Fujimori K."/>
            <person name="Tanai H."/>
            <person name="Kimata M."/>
            <person name="Watanabe M."/>
            <person name="Hiraoka S."/>
            <person name="Chiba Y."/>
            <person name="Ishida S."/>
            <person name="Ono Y."/>
            <person name="Takiguchi S."/>
            <person name="Watanabe S."/>
            <person name="Yosida M."/>
            <person name="Hotuta T."/>
            <person name="Kusano J."/>
            <person name="Kanehori K."/>
            <person name="Takahashi-Fujii A."/>
            <person name="Hara H."/>
            <person name="Tanase T.-O."/>
            <person name="Nomura Y."/>
            <person name="Togiya S."/>
            <person name="Komai F."/>
            <person name="Hara R."/>
            <person name="Takeuchi K."/>
            <person name="Arita M."/>
            <person name="Imose N."/>
            <person name="Musashino K."/>
            <person name="Yuuki H."/>
            <person name="Oshima A."/>
            <person name="Sasaki N."/>
            <person name="Aotsuka S."/>
            <person name="Yoshikawa Y."/>
            <person name="Matsunawa H."/>
            <person name="Ichihara T."/>
            <person name="Shiohata N."/>
            <person name="Sano S."/>
            <person name="Moriya S."/>
            <person name="Momiyama H."/>
            <person name="Satoh N."/>
            <person name="Takami S."/>
            <person name="Terashima Y."/>
            <person name="Suzuki O."/>
            <person name="Nakagawa S."/>
            <person name="Senoh A."/>
            <person name="Mizoguchi H."/>
            <person name="Goto Y."/>
            <person name="Shimizu F."/>
            <person name="Wakebe H."/>
            <person name="Hishigaki H."/>
            <person name="Watanabe T."/>
            <person name="Sugiyama A."/>
            <person name="Takemoto M."/>
            <person name="Kawakami B."/>
            <person name="Yamazaki M."/>
            <person name="Watanabe K."/>
            <person name="Kumagai A."/>
            <person name="Itakura S."/>
            <person name="Fukuzumi Y."/>
            <person name="Fujimori Y."/>
            <person name="Komiyama M."/>
            <person name="Tashiro H."/>
            <person name="Tanigami A."/>
            <person name="Fujiwara T."/>
            <person name="Ono T."/>
            <person name="Yamada K."/>
            <person name="Fujii Y."/>
            <person name="Ozaki K."/>
            <person name="Hirao M."/>
            <person name="Ohmori Y."/>
            <person name="Kawabata A."/>
            <person name="Hikiji T."/>
            <person name="Kobatake N."/>
            <person name="Inagaki H."/>
            <person name="Ikema Y."/>
            <person name="Okamoto S."/>
            <person name="Okitani R."/>
            <person name="Kawakami T."/>
            <person name="Noguchi S."/>
            <person name="Itoh T."/>
            <person name="Shigeta K."/>
            <person name="Senba T."/>
            <person name="Matsumura K."/>
            <person name="Nakajima Y."/>
            <person name="Mizuno T."/>
            <person name="Morinaga M."/>
            <person name="Sasaki M."/>
            <person name="Togashi T."/>
            <person name="Oyama M."/>
            <person name="Hata H."/>
            <person name="Watanabe M."/>
            <person name="Komatsu T."/>
            <person name="Mizushima-Sugano J."/>
            <person name="Satoh T."/>
            <person name="Shirai Y."/>
            <person name="Takahashi Y."/>
            <person name="Nakagawa K."/>
            <person name="Okumura K."/>
            <person name="Nagase T."/>
            <person name="Nomura N."/>
            <person name="Kikuchi H."/>
            <person name="Masuho Y."/>
            <person name="Yamashita R."/>
            <person name="Nakai K."/>
            <person name="Yada T."/>
            <person name="Nakamura Y."/>
            <person name="Ohara O."/>
            <person name="Isogai T."/>
            <person name="Sugano S."/>
        </authorList>
    </citation>
    <scope>NUCLEOTIDE SEQUENCE [LARGE SCALE MRNA] (ISOFORM 2)</scope>
</reference>
<reference key="5">
    <citation type="journal article" date="2006" name="Nature">
        <title>The finished DNA sequence of human chromosome 12.</title>
        <authorList>
            <person name="Scherer S.E."/>
            <person name="Muzny D.M."/>
            <person name="Buhay C.J."/>
            <person name="Chen R."/>
            <person name="Cree A."/>
            <person name="Ding Y."/>
            <person name="Dugan-Rocha S."/>
            <person name="Gill R."/>
            <person name="Gunaratne P."/>
            <person name="Harris R.A."/>
            <person name="Hawes A.C."/>
            <person name="Hernandez J."/>
            <person name="Hodgson A.V."/>
            <person name="Hume J."/>
            <person name="Jackson A."/>
            <person name="Khan Z.M."/>
            <person name="Kovar-Smith C."/>
            <person name="Lewis L.R."/>
            <person name="Lozado R.J."/>
            <person name="Metzker M.L."/>
            <person name="Milosavljevic A."/>
            <person name="Miner G.R."/>
            <person name="Montgomery K.T."/>
            <person name="Morgan M.B."/>
            <person name="Nazareth L.V."/>
            <person name="Scott G."/>
            <person name="Sodergren E."/>
            <person name="Song X.-Z."/>
            <person name="Steffen D."/>
            <person name="Lovering R.C."/>
            <person name="Wheeler D.A."/>
            <person name="Worley K.C."/>
            <person name="Yuan Y."/>
            <person name="Zhang Z."/>
            <person name="Adams C.Q."/>
            <person name="Ansari-Lari M.A."/>
            <person name="Ayele M."/>
            <person name="Brown M.J."/>
            <person name="Chen G."/>
            <person name="Chen Z."/>
            <person name="Clerc-Blankenburg K.P."/>
            <person name="Davis C."/>
            <person name="Delgado O."/>
            <person name="Dinh H.H."/>
            <person name="Draper H."/>
            <person name="Gonzalez-Garay M.L."/>
            <person name="Havlak P."/>
            <person name="Jackson L.R."/>
            <person name="Jacob L.S."/>
            <person name="Kelly S.H."/>
            <person name="Li L."/>
            <person name="Li Z."/>
            <person name="Liu J."/>
            <person name="Liu W."/>
            <person name="Lu J."/>
            <person name="Maheshwari M."/>
            <person name="Nguyen B.-V."/>
            <person name="Okwuonu G.O."/>
            <person name="Pasternak S."/>
            <person name="Perez L.M."/>
            <person name="Plopper F.J.H."/>
            <person name="Santibanez J."/>
            <person name="Shen H."/>
            <person name="Tabor P.E."/>
            <person name="Verduzco D."/>
            <person name="Waldron L."/>
            <person name="Wang Q."/>
            <person name="Williams G.A."/>
            <person name="Zhang J."/>
            <person name="Zhou J."/>
            <person name="Allen C.C."/>
            <person name="Amin A.G."/>
            <person name="Anyalebechi V."/>
            <person name="Bailey M."/>
            <person name="Barbaria J.A."/>
            <person name="Bimage K.E."/>
            <person name="Bryant N.P."/>
            <person name="Burch P.E."/>
            <person name="Burkett C.E."/>
            <person name="Burrell K.L."/>
            <person name="Calderon E."/>
            <person name="Cardenas V."/>
            <person name="Carter K."/>
            <person name="Casias K."/>
            <person name="Cavazos I."/>
            <person name="Cavazos S.R."/>
            <person name="Ceasar H."/>
            <person name="Chacko J."/>
            <person name="Chan S.N."/>
            <person name="Chavez D."/>
            <person name="Christopoulos C."/>
            <person name="Chu J."/>
            <person name="Cockrell R."/>
            <person name="Cox C.D."/>
            <person name="Dang M."/>
            <person name="Dathorne S.R."/>
            <person name="David R."/>
            <person name="Davis C.M."/>
            <person name="Davy-Carroll L."/>
            <person name="Deshazo D.R."/>
            <person name="Donlin J.E."/>
            <person name="D'Souza L."/>
            <person name="Eaves K.A."/>
            <person name="Egan A."/>
            <person name="Emery-Cohen A.J."/>
            <person name="Escotto M."/>
            <person name="Flagg N."/>
            <person name="Forbes L.D."/>
            <person name="Gabisi A.M."/>
            <person name="Garza M."/>
            <person name="Hamilton C."/>
            <person name="Henderson N."/>
            <person name="Hernandez O."/>
            <person name="Hines S."/>
            <person name="Hogues M.E."/>
            <person name="Huang M."/>
            <person name="Idlebird D.G."/>
            <person name="Johnson R."/>
            <person name="Jolivet A."/>
            <person name="Jones S."/>
            <person name="Kagan R."/>
            <person name="King L.M."/>
            <person name="Leal B."/>
            <person name="Lebow H."/>
            <person name="Lee S."/>
            <person name="LeVan J.M."/>
            <person name="Lewis L.C."/>
            <person name="London P."/>
            <person name="Lorensuhewa L.M."/>
            <person name="Loulseged H."/>
            <person name="Lovett D.A."/>
            <person name="Lucier A."/>
            <person name="Lucier R.L."/>
            <person name="Ma J."/>
            <person name="Madu R.C."/>
            <person name="Mapua P."/>
            <person name="Martindale A.D."/>
            <person name="Martinez E."/>
            <person name="Massey E."/>
            <person name="Mawhiney S."/>
            <person name="Meador M.G."/>
            <person name="Mendez S."/>
            <person name="Mercado C."/>
            <person name="Mercado I.C."/>
            <person name="Merritt C.E."/>
            <person name="Miner Z.L."/>
            <person name="Minja E."/>
            <person name="Mitchell T."/>
            <person name="Mohabbat F."/>
            <person name="Mohabbat K."/>
            <person name="Montgomery B."/>
            <person name="Moore N."/>
            <person name="Morris S."/>
            <person name="Munidasa M."/>
            <person name="Ngo R.N."/>
            <person name="Nguyen N.B."/>
            <person name="Nickerson E."/>
            <person name="Nwaokelemeh O.O."/>
            <person name="Nwokenkwo S."/>
            <person name="Obregon M."/>
            <person name="Oguh M."/>
            <person name="Oragunye N."/>
            <person name="Oviedo R.J."/>
            <person name="Parish B.J."/>
            <person name="Parker D.N."/>
            <person name="Parrish J."/>
            <person name="Parks K.L."/>
            <person name="Paul H.A."/>
            <person name="Payton B.A."/>
            <person name="Perez A."/>
            <person name="Perrin W."/>
            <person name="Pickens A."/>
            <person name="Primus E.L."/>
            <person name="Pu L.-L."/>
            <person name="Puazo M."/>
            <person name="Quiles M.M."/>
            <person name="Quiroz J.B."/>
            <person name="Rabata D."/>
            <person name="Reeves K."/>
            <person name="Ruiz S.J."/>
            <person name="Shao H."/>
            <person name="Sisson I."/>
            <person name="Sonaike T."/>
            <person name="Sorelle R.P."/>
            <person name="Sutton A.E."/>
            <person name="Svatek A.F."/>
            <person name="Svetz L.A."/>
            <person name="Tamerisa K.S."/>
            <person name="Taylor T.R."/>
            <person name="Teague B."/>
            <person name="Thomas N."/>
            <person name="Thorn R.D."/>
            <person name="Trejos Z.Y."/>
            <person name="Trevino B.K."/>
            <person name="Ukegbu O.N."/>
            <person name="Urban J.B."/>
            <person name="Vasquez L.I."/>
            <person name="Vera V.A."/>
            <person name="Villasana D.M."/>
            <person name="Wang L."/>
            <person name="Ward-Moore S."/>
            <person name="Warren J.T."/>
            <person name="Wei X."/>
            <person name="White F."/>
            <person name="Williamson A.L."/>
            <person name="Wleczyk R."/>
            <person name="Wooden H.S."/>
            <person name="Wooden S.H."/>
            <person name="Yen J."/>
            <person name="Yoon L."/>
            <person name="Yoon V."/>
            <person name="Zorrilla S.E."/>
            <person name="Nelson D."/>
            <person name="Kucherlapati R."/>
            <person name="Weinstock G."/>
            <person name="Gibbs R.A."/>
        </authorList>
    </citation>
    <scope>NUCLEOTIDE SEQUENCE [LARGE SCALE GENOMIC DNA]</scope>
</reference>
<reference key="6">
    <citation type="journal article" date="2004" name="Genome Res.">
        <title>The status, quality, and expansion of the NIH full-length cDNA project: the Mammalian Gene Collection (MGC).</title>
        <authorList>
            <consortium name="The MGC Project Team"/>
        </authorList>
    </citation>
    <scope>NUCLEOTIDE SEQUENCE [LARGE SCALE MRNA] (ISOFORMS 1; 2; 3 AND 4)</scope>
    <source>
        <tissue>Colon</tissue>
        <tissue>Eye</tissue>
        <tissue>Ovary</tissue>
    </source>
</reference>
<reference key="7">
    <citation type="journal article" date="1994" name="J. Biol. Chem.">
        <title>Identification of the nuclear and nucleolar localization signals of the protein p120. Interaction with translocation protein B23.</title>
        <authorList>
            <person name="Valdez B.C."/>
            <person name="Perlaky L."/>
            <person name="Henning D."/>
            <person name="Saijo Y."/>
            <person name="Chan P.K."/>
            <person name="Busch H."/>
        </authorList>
    </citation>
    <scope>SUBCELLULAR LOCATION</scope>
    <scope>NUCLEOLAR LOCALIZATION SIGNAL</scope>
    <scope>NUCLEAR LOCALIZATION SIGNAL</scope>
    <scope>INTERACTION WITH NPM1</scope>
</reference>
<reference key="8">
    <citation type="journal article" date="1998" name="Eur. J. Biochem.">
        <title>The 58-kDa microspherule protein (MSP58), a nucleolar protein, interacts with nucleolar protein p120.</title>
        <authorList>
            <person name="Ren Y."/>
            <person name="Busch R.K."/>
            <person name="Perlaky L."/>
            <person name="Busch H."/>
        </authorList>
    </citation>
    <scope>INTERACTION WITH MCRS1</scope>
</reference>
<reference key="9">
    <citation type="journal article" date="2002" name="Mol. Biol. Cell">
        <title>Functional proteomic analysis of human nucleolus.</title>
        <authorList>
            <person name="Scherl A."/>
            <person name="Coute Y."/>
            <person name="Deon C."/>
            <person name="Calle A."/>
            <person name="Kindbeiter K."/>
            <person name="Sanchez J.-C."/>
            <person name="Greco A."/>
            <person name="Hochstrasser D.F."/>
            <person name="Diaz J.-J."/>
        </authorList>
    </citation>
    <scope>SUBCELLULAR LOCATION [LARGE SCALE ANALYSIS]</scope>
    <source>
        <tissue>Cervix carcinoma</tissue>
    </source>
</reference>
<reference key="10">
    <citation type="journal article" date="2006" name="Cell">
        <title>Global, in vivo, and site-specific phosphorylation dynamics in signaling networks.</title>
        <authorList>
            <person name="Olsen J.V."/>
            <person name="Blagoev B."/>
            <person name="Gnad F."/>
            <person name="Macek B."/>
            <person name="Kumar C."/>
            <person name="Mortensen P."/>
            <person name="Mann M."/>
        </authorList>
    </citation>
    <scope>PHOSPHORYLATION [LARGE SCALE ANALYSIS] AT SER-181 AND THR-185</scope>
    <scope>IDENTIFICATION BY MASS SPECTROMETRY [LARGE SCALE ANALYSIS]</scope>
    <source>
        <tissue>Cervix carcinoma</tissue>
    </source>
</reference>
<reference key="11">
    <citation type="journal article" date="2006" name="Nat. Biotechnol.">
        <title>A probability-based approach for high-throughput protein phosphorylation analysis and site localization.</title>
        <authorList>
            <person name="Beausoleil S.A."/>
            <person name="Villen J."/>
            <person name="Gerber S.A."/>
            <person name="Rush J."/>
            <person name="Gygi S.P."/>
        </authorList>
    </citation>
    <scope>PHOSPHORYLATION [LARGE SCALE ANALYSIS] AT SER-732</scope>
    <scope>IDENTIFICATION BY MASS SPECTROMETRY [LARGE SCALE ANALYSIS]</scope>
    <source>
        <tissue>Cervix carcinoma</tissue>
    </source>
</reference>
<reference key="12">
    <citation type="journal article" date="2007" name="J. Proteome Res.">
        <title>Improved titanium dioxide enrichment of phosphopeptides from HeLa cells and high confident phosphopeptide identification by cross-validation of MS/MS and MS/MS/MS spectra.</title>
        <authorList>
            <person name="Yu L.R."/>
            <person name="Zhu Z."/>
            <person name="Chan K.C."/>
            <person name="Issaq H.J."/>
            <person name="Dimitrov D.S."/>
            <person name="Veenstra T.D."/>
        </authorList>
    </citation>
    <scope>PHOSPHORYLATION [LARGE SCALE ANALYSIS] AT SER-67</scope>
    <scope>IDENTIFICATION BY MASS SPECTROMETRY [LARGE SCALE ANALYSIS]</scope>
    <source>
        <tissue>Cervix carcinoma</tissue>
    </source>
</reference>
<reference key="13">
    <citation type="journal article" date="2008" name="J. Proteome Res.">
        <title>Combining protein-based IMAC, peptide-based IMAC, and MudPIT for efficient phosphoproteomic analysis.</title>
        <authorList>
            <person name="Cantin G.T."/>
            <person name="Yi W."/>
            <person name="Lu B."/>
            <person name="Park S.K."/>
            <person name="Xu T."/>
            <person name="Lee J.-D."/>
            <person name="Yates J.R. III"/>
        </authorList>
    </citation>
    <scope>IDENTIFICATION BY MASS SPECTROMETRY [LARGE SCALE ANALYSIS]</scope>
    <source>
        <tissue>Cervix carcinoma</tissue>
    </source>
</reference>
<reference key="14">
    <citation type="journal article" date="2008" name="Mol. Cell">
        <title>Kinase-selective enrichment enables quantitative phosphoproteomics of the kinome across the cell cycle.</title>
        <authorList>
            <person name="Daub H."/>
            <person name="Olsen J.V."/>
            <person name="Bairlein M."/>
            <person name="Gnad F."/>
            <person name="Oppermann F.S."/>
            <person name="Korner R."/>
            <person name="Greff Z."/>
            <person name="Keri G."/>
            <person name="Stemmann O."/>
            <person name="Mann M."/>
        </authorList>
    </citation>
    <scope>PHOSPHORYLATION [LARGE SCALE ANALYSIS] AT SER-58; SER-181 AND THR-185</scope>
    <scope>IDENTIFICATION BY MASS SPECTROMETRY [LARGE SCALE ANALYSIS]</scope>
    <source>
        <tissue>Cervix carcinoma</tissue>
    </source>
</reference>
<reference key="15">
    <citation type="journal article" date="2008" name="Proc. Natl. Acad. Sci. U.S.A.">
        <title>A quantitative atlas of mitotic phosphorylation.</title>
        <authorList>
            <person name="Dephoure N."/>
            <person name="Zhou C."/>
            <person name="Villen J."/>
            <person name="Beausoleil S.A."/>
            <person name="Bakalarski C.E."/>
            <person name="Elledge S.J."/>
            <person name="Gygi S.P."/>
        </authorList>
    </citation>
    <scope>PHOSPHORYLATION [LARGE SCALE ANALYSIS] AT SER-36; SER-67; SER-181; THR-185; SER-666; SER-675; SER-732; SER-734; THR-739; THR-776; SER-786 AND SER-812</scope>
    <scope>IDENTIFICATION BY MASS SPECTROMETRY [LARGE SCALE ANALYSIS]</scope>
    <source>
        <tissue>Cervix carcinoma</tissue>
    </source>
</reference>
<reference key="16">
    <citation type="journal article" date="2009" name="Anal. Chem.">
        <title>Lys-N and trypsin cover complementary parts of the phosphoproteome in a refined SCX-based approach.</title>
        <authorList>
            <person name="Gauci S."/>
            <person name="Helbig A.O."/>
            <person name="Slijper M."/>
            <person name="Krijgsveld J."/>
            <person name="Heck A.J."/>
            <person name="Mohammed S."/>
        </authorList>
    </citation>
    <scope>IDENTIFICATION BY MASS SPECTROMETRY [LARGE SCALE ANALYSIS]</scope>
</reference>
<reference key="17">
    <citation type="journal article" date="2009" name="Sci. Signal.">
        <title>Quantitative phosphoproteomic analysis of T cell receptor signaling reveals system-wide modulation of protein-protein interactions.</title>
        <authorList>
            <person name="Mayya V."/>
            <person name="Lundgren D.H."/>
            <person name="Hwang S.-I."/>
            <person name="Rezaul K."/>
            <person name="Wu L."/>
            <person name="Eng J.K."/>
            <person name="Rodionov V."/>
            <person name="Han D.K."/>
        </authorList>
    </citation>
    <scope>PHOSPHORYLATION [LARGE SCALE ANALYSIS] AT SER-181; THR-185 AND SER-732</scope>
    <scope>IDENTIFICATION BY MASS SPECTROMETRY [LARGE SCALE ANALYSIS]</scope>
    <source>
        <tissue>Leukemic T-cell</tissue>
    </source>
</reference>
<reference key="18">
    <citation type="journal article" date="2009" name="Science">
        <title>Lysine acetylation targets protein complexes and co-regulates major cellular functions.</title>
        <authorList>
            <person name="Choudhary C."/>
            <person name="Kumar C."/>
            <person name="Gnad F."/>
            <person name="Nielsen M.L."/>
            <person name="Rehman M."/>
            <person name="Walther T.C."/>
            <person name="Olsen J.V."/>
            <person name="Mann M."/>
        </authorList>
    </citation>
    <scope>ACETYLATION [LARGE SCALE ANALYSIS] AT LYS-649</scope>
    <scope>IDENTIFICATION BY MASS SPECTROMETRY [LARGE SCALE ANALYSIS]</scope>
</reference>
<reference key="19">
    <citation type="journal article" date="2010" name="Mol. Biol. Cell">
        <title>RRP1B targets PP1 to mammalian cell nucleoli and is associated with pre-60S ribosomal subunits.</title>
        <authorList>
            <person name="Chamousset D."/>
            <person name="De Wever V."/>
            <person name="Moorhead G.B."/>
            <person name="Chen Y."/>
            <person name="Boisvert F.M."/>
            <person name="Lamond A.I."/>
            <person name="Trinkle-Mulcahy L."/>
        </authorList>
    </citation>
    <scope>INTERACTION WITH RRP1B</scope>
</reference>
<reference key="20">
    <citation type="journal article" date="2010" name="Sci. Signal.">
        <title>Quantitative phosphoproteomics reveals widespread full phosphorylation site occupancy during mitosis.</title>
        <authorList>
            <person name="Olsen J.V."/>
            <person name="Vermeulen M."/>
            <person name="Santamaria A."/>
            <person name="Kumar C."/>
            <person name="Miller M.L."/>
            <person name="Jensen L.J."/>
            <person name="Gnad F."/>
            <person name="Cox J."/>
            <person name="Jensen T.S."/>
            <person name="Nigg E.A."/>
            <person name="Brunak S."/>
            <person name="Mann M."/>
        </authorList>
    </citation>
    <scope>PHOSPHORYLATION [LARGE SCALE ANALYSIS] AT SER-181; THR-185; SER-732; SER-786 AND SER-812</scope>
    <scope>IDENTIFICATION BY MASS SPECTROMETRY [LARGE SCALE ANALYSIS]</scope>
    <source>
        <tissue>Cervix carcinoma</tissue>
    </source>
</reference>
<reference key="21">
    <citation type="journal article" date="2011" name="BMC Syst. Biol.">
        <title>Initial characterization of the human central proteome.</title>
        <authorList>
            <person name="Burkard T.R."/>
            <person name="Planyavsky M."/>
            <person name="Kaupe I."/>
            <person name="Breitwieser F.P."/>
            <person name="Buerckstuemmer T."/>
            <person name="Bennett K.L."/>
            <person name="Superti-Furga G."/>
            <person name="Colinge J."/>
        </authorList>
    </citation>
    <scope>IDENTIFICATION BY MASS SPECTROMETRY [LARGE SCALE ANALYSIS]</scope>
</reference>
<reference key="22">
    <citation type="journal article" date="2011" name="Sci. Signal.">
        <title>System-wide temporal characterization of the proteome and phosphoproteome of human embryonic stem cell differentiation.</title>
        <authorList>
            <person name="Rigbolt K.T."/>
            <person name="Prokhorova T.A."/>
            <person name="Akimov V."/>
            <person name="Henningsen J."/>
            <person name="Johansen P.T."/>
            <person name="Kratchmarova I."/>
            <person name="Kassem M."/>
            <person name="Mann M."/>
            <person name="Olsen J.V."/>
            <person name="Blagoev B."/>
        </authorList>
    </citation>
    <scope>PHOSPHORYLATION [LARGE SCALE ANALYSIS] AT SER-67; SER-181; THR-185; THR-195; SER-732; SER-786 AND SER-801</scope>
    <scope>IDENTIFICATION BY MASS SPECTROMETRY [LARGE SCALE ANALYSIS]</scope>
</reference>
<reference key="23">
    <citation type="journal article" date="2013" name="Cell Rep.">
        <title>The 5S RNP couples p53 homeostasis to ribosome biogenesis and nucleolar stress.</title>
        <authorList>
            <person name="Sloan K.E."/>
            <person name="Bohnsack M.T."/>
            <person name="Watkins N.J."/>
        </authorList>
    </citation>
    <scope>FUNCTION</scope>
</reference>
<reference key="24">
    <citation type="journal article" date="2013" name="Genes Cells">
        <title>Nucleolar scaffold protein, WDR46, determines the granular compartmental localization of nucleolin and DDX21.</title>
        <authorList>
            <person name="Hirai Y."/>
            <person name="Louvet E."/>
            <person name="Oda T."/>
            <person name="Kumeta M."/>
            <person name="Watanabe Y."/>
            <person name="Horigome T."/>
            <person name="Takeyasu K."/>
        </authorList>
    </citation>
    <scope>INTERACTION WITH WDR46</scope>
</reference>
<reference key="25">
    <citation type="journal article" date="2013" name="J. Proteome Res.">
        <title>Toward a comprehensive characterization of a human cancer cell phosphoproteome.</title>
        <authorList>
            <person name="Zhou H."/>
            <person name="Di Palma S."/>
            <person name="Preisinger C."/>
            <person name="Peng M."/>
            <person name="Polat A.N."/>
            <person name="Heck A.J."/>
            <person name="Mohammed S."/>
        </authorList>
    </citation>
    <scope>PHOSPHORYLATION [LARGE SCALE ANALYSIS] AT SER-58; SER-67; SER-732 AND SER-786</scope>
    <scope>IDENTIFICATION BY MASS SPECTROMETRY [LARGE SCALE ANALYSIS]</scope>
    <source>
        <tissue>Cervix carcinoma</tissue>
        <tissue>Erythroleukemia</tissue>
    </source>
</reference>
<reference key="26">
    <citation type="journal article" date="2014" name="Proc. Natl. Acad. Sci. U.S.A.">
        <title>Mapping of SUMO sites and analysis of SUMOylation changes induced by external stimuli.</title>
        <authorList>
            <person name="Impens F."/>
            <person name="Radoshevich L."/>
            <person name="Cossart P."/>
            <person name="Ribet D."/>
        </authorList>
    </citation>
    <scope>SUMOYLATION [LARGE SCALE ANALYSIS] AT LYS-615</scope>
    <scope>IDENTIFICATION BY MASS SPECTROMETRY [LARGE SCALE ANALYSIS]</scope>
</reference>
<reference key="27">
    <citation type="journal article" date="2015" name="PLoS ONE">
        <title>Eukaryotic rRNA Modification by Yeast 5-Methylcytosine-Methyltransferases and Human Proliferation-Associated Antigen p120.</title>
        <authorList>
            <person name="Bourgeois G."/>
            <person name="Ney M."/>
            <person name="Gaspar I."/>
            <person name="Aigueperse C."/>
            <person name="Schaefer M."/>
            <person name="Kellner S."/>
            <person name="Helm M."/>
            <person name="Motorin Y."/>
        </authorList>
    </citation>
    <scope>FUNCTION</scope>
    <scope>CATALYTIC ACTIVITY</scope>
    <scope>SUBCELLULAR LOCATION</scope>
    <scope>REGION</scope>
</reference>
<reference key="28">
    <citation type="journal article" date="2017" name="Nat. Struct. Mol. Biol.">
        <title>Site-specific mapping of the human SUMO proteome reveals co-modification with phosphorylation.</title>
        <authorList>
            <person name="Hendriks I.A."/>
            <person name="Lyon D."/>
            <person name="Young C."/>
            <person name="Jensen L.J."/>
            <person name="Vertegaal A.C."/>
            <person name="Nielsen M.L."/>
        </authorList>
    </citation>
    <scope>SUMOYLATION [LARGE SCALE ANALYSIS] AT LYS-71; LYS-272 AND LYS-615</scope>
    <scope>IDENTIFICATION BY MASS SPECTROMETRY [LARGE SCALE ANALYSIS]</scope>
</reference>
<reference key="29">
    <citation type="journal article" date="2022" name="Nucleic Acids Res.">
        <title>Human NOP2/NSUN1 regulates ribosome biogenesis through non-catalytic complex formation with box C/D snoRNPs.</title>
        <authorList>
            <person name="Liao H."/>
            <person name="Gaur A."/>
            <person name="McConie H."/>
            <person name="Shekar A."/>
            <person name="Wang K."/>
            <person name="Chang J.T."/>
            <person name="Breton G."/>
            <person name="Denicourt C."/>
        </authorList>
    </citation>
    <scope>FUNCTION</scope>
    <scope>CATALYTIC ACTIVITY</scope>
    <scope>SUBCELLULAR LOCATION</scope>
    <scope>INTERACTION WITH NOP56; FBL; RUVBL1 AND NUFIP1</scope>
    <scope>MUTAGENESIS OF CYS-517</scope>
</reference>
<sequence length="812" mass="89302">MGRKLDPTKEKRGPGRKARKQKGAETELVRFLPAVSDENSKRLSSRARKRAAKRRLGSVEAPKTNKSPEAKPLPGKLPKGISAGAVQTAGKKGPQSLFNAPRGKKRPAPGSDEEEEEEDSEEDGMVNHGDLWGSEDDADTVDDYGADSNSEDEEEGEALLPIERAARKQKAREAAAGIQWSEEETEDEEEEKEVTPESGPPKVEEADGGLQINVDEEPFVLPPAGEMEQDAQAPDLQRVHKRIQDIVGILRDFGAQREEGRSRSEYLNRLKKDLAIYYSYGDFLLGKLMDLFPLSELVEFLEANEVPRPVTLRTNTLKTRRRDLAQALINRGVNLDPLGKWSKTGLVVYDSSVPIGATPEYLAGHYMLQGASSMLPVMALAPQEHERILDMCCAPGGKTSYMAQLMKNTGVILANDANAERLKSVVGNLHRLGVTNTIISHYDGRQFPKVVGGFDRVLLDAPCSGTGVISKDPAVKTNKDEKDILRCAHLQKELLLSAIDSVNATSKTGGYLVYCTCSITVEENEWVVDYALKKRNVRLVPTGLDFGQEGFTRFRERRFHPSLRSTRRFYPHTHNMDGFFIAKFKKFSNSIPQSQTGNSETATPTNVDLPQVIPKSENSSQPAKKAKGAAKTKQQLQKQQHPKKASFQKLNGISKGADSELSTVPSVTKTQASSSFQDSSQPAGKAEGIREPKVTGKLKQRSPKLQSSKKVAFLRQNAPPKGTDTQTPAVLSPSKTQATLKPKDHHQPLGRAKGVEKQQLPEQPFEKAAFQKQNDTPKGPQPPTVSPIRSSRPPPAKRKKSQSRGNSQLLLS</sequence>
<gene>
    <name type="primary">NOP2</name>
    <name type="synonym">NOL1</name>
    <name type="synonym">NSUN1</name>
</gene>
<accession>P46087</accession>
<accession>A1A4Z3</accession>
<accession>B3KPD6</accession>
<accession>Q05BA7</accession>
<accession>Q0P5S5</accession>
<accession>Q3KQS4</accession>
<accession>Q58F30</accession>
<protein>
    <recommendedName>
        <fullName>28S rRNA (cytosine(4447)-C(5))-methyltransferase</fullName>
        <ecNumber>2.1.1.-</ecNumber>
    </recommendedName>
    <alternativeName>
        <fullName>Nucleolar protein 1</fullName>
    </alternativeName>
    <alternativeName>
        <fullName>Nucleolar protein 2 homolog</fullName>
    </alternativeName>
    <alternativeName>
        <fullName>Proliferating-cell nucleolar antigen p120</fullName>
    </alternativeName>
    <alternativeName>
        <fullName evidence="17">Proliferation-associated nucleolar protein p120</fullName>
    </alternativeName>
</protein>